<organism>
    <name type="scientific">Gallus gallus</name>
    <name type="common">Chicken</name>
    <dbReference type="NCBI Taxonomy" id="9031"/>
    <lineage>
        <taxon>Eukaryota</taxon>
        <taxon>Metazoa</taxon>
        <taxon>Chordata</taxon>
        <taxon>Craniata</taxon>
        <taxon>Vertebrata</taxon>
        <taxon>Euteleostomi</taxon>
        <taxon>Archelosauria</taxon>
        <taxon>Archosauria</taxon>
        <taxon>Dinosauria</taxon>
        <taxon>Saurischia</taxon>
        <taxon>Theropoda</taxon>
        <taxon>Coelurosauria</taxon>
        <taxon>Aves</taxon>
        <taxon>Neognathae</taxon>
        <taxon>Galloanserae</taxon>
        <taxon>Galliformes</taxon>
        <taxon>Phasianidae</taxon>
        <taxon>Phasianinae</taxon>
        <taxon>Gallus</taxon>
    </lineage>
</organism>
<reference key="1">
    <citation type="submission" date="1990-10" db="EMBL/GenBank/DDBJ databases">
        <authorList>
            <person name="Konkel D.A."/>
            <person name="Song S.K."/>
        </authorList>
    </citation>
    <scope>NUCLEOTIDE SEQUENCE [MRNA]</scope>
    <source>
        <strain>White leghorn</strain>
        <tissue>Embryo</tissue>
    </source>
</reference>
<evidence type="ECO:0000250" key="1"/>
<evidence type="ECO:0000255" key="2"/>
<evidence type="ECO:0000305" key="3"/>
<name>ARF5_CHICK</name>
<keyword id="KW-0931">ER-Golgi transport</keyword>
<keyword id="KW-0333">Golgi apparatus</keyword>
<keyword id="KW-0342">GTP-binding</keyword>
<keyword id="KW-0449">Lipoprotein</keyword>
<keyword id="KW-0519">Myristate</keyword>
<keyword id="KW-0547">Nucleotide-binding</keyword>
<keyword id="KW-0653">Protein transport</keyword>
<keyword id="KW-1185">Reference proteome</keyword>
<keyword id="KW-0813">Transport</keyword>
<comment type="function">
    <text evidence="1">GTP-binding protein involved in protein trafficking; may modulate vesicle budding and uncoating within the Golgi apparatus.</text>
</comment>
<comment type="subcellular location">
    <subcellularLocation>
        <location evidence="1">Golgi apparatus</location>
    </subcellularLocation>
</comment>
<comment type="similarity">
    <text evidence="3">Belongs to the small GTPase superfamily. Arf family.</text>
</comment>
<accession>P49702</accession>
<gene>
    <name type="primary">ARF5</name>
    <name type="synonym">CPS3</name>
</gene>
<proteinExistence type="evidence at transcript level"/>
<protein>
    <recommendedName>
        <fullName>ADP-ribosylation factor 5</fullName>
    </recommendedName>
</protein>
<feature type="initiator methionine" description="Removed" evidence="2">
    <location>
        <position position="1"/>
    </location>
</feature>
<feature type="chain" id="PRO_0000207399" description="ADP-ribosylation factor 5">
    <location>
        <begin position="2"/>
        <end position="180"/>
    </location>
</feature>
<feature type="binding site" evidence="1">
    <location>
        <begin position="24"/>
        <end position="31"/>
    </location>
    <ligand>
        <name>GTP</name>
        <dbReference type="ChEBI" id="CHEBI:37565"/>
    </ligand>
</feature>
<feature type="binding site" evidence="1">
    <location>
        <begin position="67"/>
        <end position="71"/>
    </location>
    <ligand>
        <name>GTP</name>
        <dbReference type="ChEBI" id="CHEBI:37565"/>
    </ligand>
</feature>
<feature type="binding site" evidence="1">
    <location>
        <begin position="126"/>
        <end position="129"/>
    </location>
    <ligand>
        <name>GTP</name>
        <dbReference type="ChEBI" id="CHEBI:37565"/>
    </ligand>
</feature>
<feature type="lipid moiety-binding region" description="N-myristoyl glycine" evidence="2">
    <location>
        <position position="2"/>
    </location>
</feature>
<dbReference type="EMBL" id="X55998">
    <property type="protein sequence ID" value="CAA39470.1"/>
    <property type="molecule type" value="mRNA"/>
</dbReference>
<dbReference type="PIR" id="S57944">
    <property type="entry name" value="S57944"/>
</dbReference>
<dbReference type="RefSeq" id="NP_990656.1">
    <property type="nucleotide sequence ID" value="NM_205325.1"/>
</dbReference>
<dbReference type="SMR" id="P49702"/>
<dbReference type="FunCoup" id="P49702">
    <property type="interactions" value="1879"/>
</dbReference>
<dbReference type="IntAct" id="P49702">
    <property type="interactions" value="2"/>
</dbReference>
<dbReference type="MINT" id="P49702"/>
<dbReference type="STRING" id="9031.ENSGALP00000009007"/>
<dbReference type="PaxDb" id="9031-ENSGALP00000009007"/>
<dbReference type="GeneID" id="396265"/>
<dbReference type="KEGG" id="gga:396265"/>
<dbReference type="CTD" id="381"/>
<dbReference type="VEuPathDB" id="HostDB:geneid_396265"/>
<dbReference type="eggNOG" id="KOG0070">
    <property type="taxonomic scope" value="Eukaryota"/>
</dbReference>
<dbReference type="InParanoid" id="P49702"/>
<dbReference type="OrthoDB" id="2011769at2759"/>
<dbReference type="PhylomeDB" id="P49702"/>
<dbReference type="PRO" id="PR:P49702"/>
<dbReference type="Proteomes" id="UP000000539">
    <property type="component" value="Unassembled WGS sequence"/>
</dbReference>
<dbReference type="GO" id="GO:0005737">
    <property type="term" value="C:cytoplasm"/>
    <property type="evidence" value="ECO:0000250"/>
    <property type="project" value="AgBase"/>
</dbReference>
<dbReference type="GO" id="GO:0005794">
    <property type="term" value="C:Golgi apparatus"/>
    <property type="evidence" value="ECO:0007669"/>
    <property type="project" value="UniProtKB-SubCell"/>
</dbReference>
<dbReference type="GO" id="GO:0005886">
    <property type="term" value="C:plasma membrane"/>
    <property type="evidence" value="ECO:0000250"/>
    <property type="project" value="AgBase"/>
</dbReference>
<dbReference type="GO" id="GO:0005525">
    <property type="term" value="F:GTP binding"/>
    <property type="evidence" value="ECO:0000318"/>
    <property type="project" value="GO_Central"/>
</dbReference>
<dbReference type="GO" id="GO:0003924">
    <property type="term" value="F:GTPase activity"/>
    <property type="evidence" value="ECO:0007669"/>
    <property type="project" value="InterPro"/>
</dbReference>
<dbReference type="GO" id="GO:0006886">
    <property type="term" value="P:intracellular protein transport"/>
    <property type="evidence" value="ECO:0000318"/>
    <property type="project" value="GO_Central"/>
</dbReference>
<dbReference type="GO" id="GO:0016192">
    <property type="term" value="P:vesicle-mediated transport"/>
    <property type="evidence" value="ECO:0000318"/>
    <property type="project" value="GO_Central"/>
</dbReference>
<dbReference type="CDD" id="cd04150">
    <property type="entry name" value="Arf1_5_like"/>
    <property type="match status" value="1"/>
</dbReference>
<dbReference type="FunFam" id="3.40.50.300:FF:000024">
    <property type="entry name" value="ADP-ribosylation factor 1"/>
    <property type="match status" value="1"/>
</dbReference>
<dbReference type="Gene3D" id="3.40.50.300">
    <property type="entry name" value="P-loop containing nucleotide triphosphate hydrolases"/>
    <property type="match status" value="1"/>
</dbReference>
<dbReference type="InterPro" id="IPR045872">
    <property type="entry name" value="Arf1-5-like"/>
</dbReference>
<dbReference type="InterPro" id="IPR027417">
    <property type="entry name" value="P-loop_NTPase"/>
</dbReference>
<dbReference type="InterPro" id="IPR005225">
    <property type="entry name" value="Small_GTP-bd"/>
</dbReference>
<dbReference type="InterPro" id="IPR024156">
    <property type="entry name" value="Small_GTPase_ARF"/>
</dbReference>
<dbReference type="InterPro" id="IPR006689">
    <property type="entry name" value="Small_GTPase_ARF/SAR"/>
</dbReference>
<dbReference type="NCBIfam" id="TIGR00231">
    <property type="entry name" value="small_GTP"/>
    <property type="match status" value="1"/>
</dbReference>
<dbReference type="PANTHER" id="PTHR11711">
    <property type="entry name" value="ADP RIBOSYLATION FACTOR-RELATED"/>
    <property type="match status" value="1"/>
</dbReference>
<dbReference type="Pfam" id="PF00025">
    <property type="entry name" value="Arf"/>
    <property type="match status" value="1"/>
</dbReference>
<dbReference type="PRINTS" id="PR00328">
    <property type="entry name" value="SAR1GTPBP"/>
</dbReference>
<dbReference type="SMART" id="SM00177">
    <property type="entry name" value="ARF"/>
    <property type="match status" value="1"/>
</dbReference>
<dbReference type="SMART" id="SM00175">
    <property type="entry name" value="RAB"/>
    <property type="match status" value="1"/>
</dbReference>
<dbReference type="SMART" id="SM00178">
    <property type="entry name" value="SAR"/>
    <property type="match status" value="1"/>
</dbReference>
<dbReference type="SUPFAM" id="SSF52540">
    <property type="entry name" value="P-loop containing nucleoside triphosphate hydrolases"/>
    <property type="match status" value="1"/>
</dbReference>
<dbReference type="PROSITE" id="PS51417">
    <property type="entry name" value="ARF"/>
    <property type="match status" value="1"/>
</dbReference>
<sequence>MGLTVSAIFSRIFGKKQMRILMVGLDAAGKTTILYKLKLGEIVTTIPTIGFNVETVEYKNICFTVWDVGGQDKIRPLWRHYFQNTQGLIFVVDSNDRERVQESAEELQKMLQEDELRDAVLLVFANKQDMPNAMVVSELTDKLGLQALRSRTWYVQATCATQGTGLYDGLDWLSHELSKR</sequence>